<protein>
    <recommendedName>
        <fullName>fMet-Leu-Phe receptor</fullName>
        <shortName>fMLP receptor</shortName>
    </recommendedName>
    <alternativeName>
        <fullName>N-formyl peptide receptor</fullName>
        <shortName>FPR</shortName>
    </alternativeName>
    <alternativeName>
        <fullName>N-formylpeptide chemoattractant receptor</fullName>
    </alternativeName>
</protein>
<comment type="function">
    <text evidence="1 2">High affinity receptor for N-formyl-methionyl peptides (fMLP), which are powerful neutrophil chemotactic factors. Binding of fMLP to the receptor stimulates intracellular calcium mobilization and superoxide anion release. This response is mediated via a G-protein that activates a phosphatidylinositol-calcium second messenger system (By similarity). Receptor for TAFA4, mediates its effects on chemoattracting macrophages, promoting phagocytosis and increasing ROS release (By similarity). Receptor for cathepsin CTSG, leading to increased phagocyte chemotaxis (By similarity).</text>
</comment>
<comment type="subcellular location">
    <subcellularLocation>
        <location evidence="1 2">Cell membrane</location>
        <topology evidence="3">Multi-pass membrane protein</topology>
    </subcellularLocation>
    <text evidence="1">Internalizes in presence of its ligand, TAFA4.</text>
</comment>
<comment type="PTM">
    <text evidence="1">Phosphorylated; which is necessary for desensitization.</text>
</comment>
<comment type="similarity">
    <text evidence="4">Belongs to the G-protein coupled receptor 1 family.</text>
</comment>
<gene>
    <name type="primary">FPR1</name>
</gene>
<proteinExistence type="inferred from homology"/>
<organism>
    <name type="scientific">Gorilla gorilla gorilla</name>
    <name type="common">Western lowland gorilla</name>
    <dbReference type="NCBI Taxonomy" id="9595"/>
    <lineage>
        <taxon>Eukaryota</taxon>
        <taxon>Metazoa</taxon>
        <taxon>Chordata</taxon>
        <taxon>Craniata</taxon>
        <taxon>Vertebrata</taxon>
        <taxon>Euteleostomi</taxon>
        <taxon>Mammalia</taxon>
        <taxon>Eutheria</taxon>
        <taxon>Euarchontoglires</taxon>
        <taxon>Primates</taxon>
        <taxon>Haplorrhini</taxon>
        <taxon>Catarrhini</taxon>
        <taxon>Hominidae</taxon>
        <taxon>Gorilla</taxon>
    </lineage>
</organism>
<reference key="1">
    <citation type="journal article" date="1996" name="Immunogenetics">
        <title>Molecular evolution of the N-formyl peptide and C5a receptors in non-human primates.</title>
        <authorList>
            <person name="Alvarez V."/>
            <person name="Coto E."/>
            <person name="Sehen F."/>
            <person name="Gouzalek-Koces S."/>
            <person name="Lopez-Larrea C."/>
        </authorList>
    </citation>
    <scope>NUCLEOTIDE SEQUENCE [GENOMIC DNA]</scope>
</reference>
<keyword id="KW-1003">Cell membrane</keyword>
<keyword id="KW-0145">Chemotaxis</keyword>
<keyword id="KW-1015">Disulfide bond</keyword>
<keyword id="KW-0297">G-protein coupled receptor</keyword>
<keyword id="KW-0325">Glycoprotein</keyword>
<keyword id="KW-0472">Membrane</keyword>
<keyword id="KW-0597">Phosphoprotein</keyword>
<keyword id="KW-0675">Receptor</keyword>
<keyword id="KW-1185">Reference proteome</keyword>
<keyword id="KW-0807">Transducer</keyword>
<keyword id="KW-0812">Transmembrane</keyword>
<keyword id="KW-1133">Transmembrane helix</keyword>
<dbReference type="EMBL" id="X97736">
    <property type="protein sequence ID" value="CAA66320.1"/>
    <property type="molecule type" value="Genomic_DNA"/>
</dbReference>
<dbReference type="SMR" id="P79176"/>
<dbReference type="STRING" id="9593.ENSGGOP00000005146"/>
<dbReference type="GlyCosmos" id="P79176">
    <property type="glycosylation" value="2 sites, No reported glycans"/>
</dbReference>
<dbReference type="eggNOG" id="KOG3656">
    <property type="taxonomic scope" value="Eukaryota"/>
</dbReference>
<dbReference type="InParanoid" id="P79176"/>
<dbReference type="Proteomes" id="UP000001519">
    <property type="component" value="Unplaced"/>
</dbReference>
<dbReference type="GO" id="GO:0005886">
    <property type="term" value="C:plasma membrane"/>
    <property type="evidence" value="ECO:0000318"/>
    <property type="project" value="GO_Central"/>
</dbReference>
<dbReference type="GO" id="GO:0004875">
    <property type="term" value="F:complement receptor activity"/>
    <property type="evidence" value="ECO:0000318"/>
    <property type="project" value="GO_Central"/>
</dbReference>
<dbReference type="GO" id="GO:0004930">
    <property type="term" value="F:G protein-coupled receptor activity"/>
    <property type="evidence" value="ECO:0000250"/>
    <property type="project" value="UniProtKB"/>
</dbReference>
<dbReference type="GO" id="GO:0004982">
    <property type="term" value="F:N-formyl peptide receptor activity"/>
    <property type="evidence" value="ECO:0000318"/>
    <property type="project" value="GO_Central"/>
</dbReference>
<dbReference type="GO" id="GO:0006935">
    <property type="term" value="P:chemotaxis"/>
    <property type="evidence" value="ECO:0007669"/>
    <property type="project" value="UniProtKB-KW"/>
</dbReference>
<dbReference type="GO" id="GO:0002430">
    <property type="term" value="P:complement receptor mediated signaling pathway"/>
    <property type="evidence" value="ECO:0000318"/>
    <property type="project" value="GO_Central"/>
</dbReference>
<dbReference type="GO" id="GO:0006954">
    <property type="term" value="P:inflammatory response"/>
    <property type="evidence" value="ECO:0000318"/>
    <property type="project" value="GO_Central"/>
</dbReference>
<dbReference type="GO" id="GO:0007200">
    <property type="term" value="P:phospholipase C-activating G protein-coupled receptor signaling pathway"/>
    <property type="evidence" value="ECO:0000318"/>
    <property type="project" value="GO_Central"/>
</dbReference>
<dbReference type="GO" id="GO:0007204">
    <property type="term" value="P:positive regulation of cytosolic calcium ion concentration"/>
    <property type="evidence" value="ECO:0000318"/>
    <property type="project" value="GO_Central"/>
</dbReference>
<dbReference type="FunFam" id="1.20.1070.10:FF:000034">
    <property type="entry name" value="G-protein coupled receptor 1"/>
    <property type="match status" value="1"/>
</dbReference>
<dbReference type="Gene3D" id="1.20.1070.10">
    <property type="entry name" value="Rhodopsin 7-helix transmembrane proteins"/>
    <property type="match status" value="1"/>
</dbReference>
<dbReference type="InterPro" id="IPR000826">
    <property type="entry name" value="Formyl_rcpt-rel"/>
</dbReference>
<dbReference type="InterPro" id="IPR000276">
    <property type="entry name" value="GPCR_Rhodpsn"/>
</dbReference>
<dbReference type="InterPro" id="IPR017452">
    <property type="entry name" value="GPCR_Rhodpsn_7TM"/>
</dbReference>
<dbReference type="PANTHER" id="PTHR24225">
    <property type="entry name" value="CHEMOTACTIC RECEPTOR"/>
    <property type="match status" value="1"/>
</dbReference>
<dbReference type="PANTHER" id="PTHR24225:SF15">
    <property type="entry name" value="FMET-LEU-PHE RECEPTOR"/>
    <property type="match status" value="1"/>
</dbReference>
<dbReference type="Pfam" id="PF00001">
    <property type="entry name" value="7tm_1"/>
    <property type="match status" value="1"/>
</dbReference>
<dbReference type="PRINTS" id="PR00526">
    <property type="entry name" value="FMETLEUPHER"/>
</dbReference>
<dbReference type="PRINTS" id="PR00237">
    <property type="entry name" value="GPCRRHODOPSN"/>
</dbReference>
<dbReference type="SUPFAM" id="SSF81321">
    <property type="entry name" value="Family A G protein-coupled receptor-like"/>
    <property type="match status" value="1"/>
</dbReference>
<dbReference type="PROSITE" id="PS00237">
    <property type="entry name" value="G_PROTEIN_RECEP_F1_1"/>
    <property type="match status" value="1"/>
</dbReference>
<dbReference type="PROSITE" id="PS50262">
    <property type="entry name" value="G_PROTEIN_RECEP_F1_2"/>
    <property type="match status" value="1"/>
</dbReference>
<feature type="chain" id="PRO_0000069443" description="fMet-Leu-Phe receptor">
    <location>
        <begin position="1" status="less than"/>
        <end position="346" status="greater than"/>
    </location>
</feature>
<feature type="topological domain" description="Extracellular" evidence="3">
    <location>
        <begin position="1" status="less than"/>
        <end position="24"/>
    </location>
</feature>
<feature type="transmembrane region" description="Helical; Name=1" evidence="3">
    <location>
        <begin position="25"/>
        <end position="47"/>
    </location>
</feature>
<feature type="topological domain" description="Cytoplasmic" evidence="3">
    <location>
        <begin position="48"/>
        <end position="58"/>
    </location>
</feature>
<feature type="transmembrane region" description="Helical; Name=2" evidence="3">
    <location>
        <begin position="59"/>
        <end position="80"/>
    </location>
</feature>
<feature type="topological domain" description="Extracellular" evidence="3">
    <location>
        <begin position="81"/>
        <end position="97"/>
    </location>
</feature>
<feature type="transmembrane region" description="Helical; Name=3" evidence="3">
    <location>
        <begin position="98"/>
        <end position="118"/>
    </location>
</feature>
<feature type="topological domain" description="Cytoplasmic" evidence="3">
    <location>
        <begin position="119"/>
        <end position="137"/>
    </location>
</feature>
<feature type="transmembrane region" description="Helical; Name=4" evidence="3">
    <location>
        <begin position="138"/>
        <end position="159"/>
    </location>
</feature>
<feature type="topological domain" description="Extracellular" evidence="3">
    <location>
        <begin position="160"/>
        <end position="202"/>
    </location>
</feature>
<feature type="transmembrane region" description="Helical; Name=5" evidence="3">
    <location>
        <begin position="203"/>
        <end position="223"/>
    </location>
</feature>
<feature type="topological domain" description="Cytoplasmic" evidence="3">
    <location>
        <begin position="224"/>
        <end position="239"/>
    </location>
</feature>
<feature type="transmembrane region" description="Helical; Name=6" evidence="3">
    <location>
        <begin position="240"/>
        <end position="263"/>
    </location>
</feature>
<feature type="topological domain" description="Extracellular" evidence="3">
    <location>
        <begin position="264"/>
        <end position="282"/>
    </location>
</feature>
<feature type="transmembrane region" description="Helical; Name=7" evidence="3">
    <location>
        <begin position="283"/>
        <end position="302"/>
    </location>
</feature>
<feature type="topological domain" description="Cytoplasmic" evidence="3">
    <location>
        <begin position="303"/>
        <end position="346" status="greater than"/>
    </location>
</feature>
<feature type="region of interest" description="Disordered" evidence="5">
    <location>
        <begin position="322"/>
        <end position="346"/>
    </location>
</feature>
<feature type="compositionally biased region" description="Polar residues" evidence="5">
    <location>
        <begin position="323"/>
        <end position="338"/>
    </location>
</feature>
<feature type="glycosylation site" description="N-linked (GlcNAc...) asparagine" evidence="3">
    <location>
        <position position="1"/>
    </location>
</feature>
<feature type="glycosylation site" description="N-linked (GlcNAc...) asparagine" evidence="3">
    <location>
        <position position="7"/>
    </location>
</feature>
<feature type="disulfide bond" evidence="4">
    <location>
        <begin position="95"/>
        <end position="173"/>
    </location>
</feature>
<feature type="non-terminal residue">
    <location>
        <position position="1"/>
    </location>
</feature>
<feature type="non-terminal residue">
    <location>
        <position position="346"/>
    </location>
</feature>
<evidence type="ECO:0000250" key="1">
    <source>
        <dbReference type="UniProtKB" id="P21462"/>
    </source>
</evidence>
<evidence type="ECO:0000250" key="2">
    <source>
        <dbReference type="UniProtKB" id="P33766"/>
    </source>
</evidence>
<evidence type="ECO:0000255" key="3"/>
<evidence type="ECO:0000255" key="4">
    <source>
        <dbReference type="PROSITE-ProRule" id="PRU00521"/>
    </source>
</evidence>
<evidence type="ECO:0000256" key="5">
    <source>
        <dbReference type="SAM" id="MobiDB-lite"/>
    </source>
</evidence>
<sequence>NSSLPTNISGGTPAVSAGYLFLDIVTYLVFAVTFVLGVLGNGLVIWVAGFRMTHTVTTISYLNLAVADFCFTSTLPFFMVKKAMGGHWPFGWFLCKFIFTIVDINLFGSVFLIALIALDRCVCVLHPVWTQNHRTVSLAKKVIIGPWVMALLLTLPVIIRVTTVPGKMGTVACTFNFSPWTNDPKERIKVAVAMLTVRGIIRFIIGFSAPMSIVAVSYGLIATKIDKQGLIKSSRTLRVLSFVAAAFFLSWSPYQVVALIATVRIRELLQGMYKEIGIAVDVTSALAFFNSCLNPMLYVFMGQDFRERLIHALPASLERALTEDSTQTSDTATNSTLPSAEVALQA</sequence>
<accession>P79176</accession>
<name>FPR1_GORGO</name>